<reference key="1">
    <citation type="submission" date="2006-03" db="EMBL/GenBank/DDBJ databases">
        <title>Complete sequence of Methylobacillus flagellatus KT.</title>
        <authorList>
            <consortium name="US DOE Joint Genome Institute"/>
            <person name="Copeland A."/>
            <person name="Lucas S."/>
            <person name="Lapidus A."/>
            <person name="Barry K."/>
            <person name="Detter J.C."/>
            <person name="Glavina del Rio T."/>
            <person name="Hammon N."/>
            <person name="Israni S."/>
            <person name="Dalin E."/>
            <person name="Tice H."/>
            <person name="Pitluck S."/>
            <person name="Brettin T."/>
            <person name="Bruce D."/>
            <person name="Han C."/>
            <person name="Tapia R."/>
            <person name="Saunders E."/>
            <person name="Gilna P."/>
            <person name="Schmutz J."/>
            <person name="Larimer F."/>
            <person name="Land M."/>
            <person name="Kyrpides N."/>
            <person name="Anderson I."/>
            <person name="Richardson P."/>
        </authorList>
    </citation>
    <scope>NUCLEOTIDE SEQUENCE [LARGE SCALE GENOMIC DNA]</scope>
    <source>
        <strain>ATCC 51484 / DSM 6875 / VKM B-1610 / KT</strain>
    </source>
</reference>
<proteinExistence type="inferred from homology"/>
<name>RECA_METFK</name>
<organism>
    <name type="scientific">Methylobacillus flagellatus (strain ATCC 51484 / DSM 6875 / VKM B-1610 / KT)</name>
    <dbReference type="NCBI Taxonomy" id="265072"/>
    <lineage>
        <taxon>Bacteria</taxon>
        <taxon>Pseudomonadati</taxon>
        <taxon>Pseudomonadota</taxon>
        <taxon>Betaproteobacteria</taxon>
        <taxon>Nitrosomonadales</taxon>
        <taxon>Methylophilaceae</taxon>
        <taxon>Methylobacillus</taxon>
    </lineage>
</organism>
<sequence length="344" mass="36971">MDENRSKALAAALSQIEKQFGKGSIMRMGDTDVAADIQAVSTGSLGLDIALGIGGLPRGRIVEIYGPESSGKTTLTLSVIAQMQKLGGTAAFIDAEHALDPVYAQKLGVNVSDLLISQPDTGEQALEIADMLVRSGSVDVVVVDSVAALTPKAEIEGEMGDSHMGLQARLMSQALRKLTANIKRTNTLVIFINQIRMKIGVMFGNPETTTGGNALKFYASVRLDIRRTGAIKKGDEVTGSETRVKVVKNKVAPPFKQAEFDILYGEGISREGEIIELGVNLKLIEKAGAWYSYKGEKIGQGKDNAREFLREHPEIANEIDAKIREHSNLANAAMTTAPDEESDE</sequence>
<feature type="chain" id="PRO_1000047944" description="Protein RecA">
    <location>
        <begin position="1"/>
        <end position="344"/>
    </location>
</feature>
<feature type="binding site" evidence="1">
    <location>
        <begin position="66"/>
        <end position="73"/>
    </location>
    <ligand>
        <name>ATP</name>
        <dbReference type="ChEBI" id="CHEBI:30616"/>
    </ligand>
</feature>
<evidence type="ECO:0000255" key="1">
    <source>
        <dbReference type="HAMAP-Rule" id="MF_00268"/>
    </source>
</evidence>
<comment type="function">
    <text evidence="1">Can catalyze the hydrolysis of ATP in the presence of single-stranded DNA, the ATP-dependent uptake of single-stranded DNA by duplex DNA, and the ATP-dependent hybridization of homologous single-stranded DNAs. It interacts with LexA causing its activation and leading to its autocatalytic cleavage.</text>
</comment>
<comment type="subcellular location">
    <subcellularLocation>
        <location evidence="1">Cytoplasm</location>
    </subcellularLocation>
</comment>
<comment type="similarity">
    <text evidence="1">Belongs to the RecA family.</text>
</comment>
<keyword id="KW-0067">ATP-binding</keyword>
<keyword id="KW-0963">Cytoplasm</keyword>
<keyword id="KW-0227">DNA damage</keyword>
<keyword id="KW-0233">DNA recombination</keyword>
<keyword id="KW-0234">DNA repair</keyword>
<keyword id="KW-0238">DNA-binding</keyword>
<keyword id="KW-0547">Nucleotide-binding</keyword>
<keyword id="KW-1185">Reference proteome</keyword>
<keyword id="KW-0742">SOS response</keyword>
<dbReference type="EMBL" id="CP000284">
    <property type="protein sequence ID" value="ABE48840.1"/>
    <property type="molecule type" value="Genomic_DNA"/>
</dbReference>
<dbReference type="RefSeq" id="WP_011478937.1">
    <property type="nucleotide sequence ID" value="NC_007947.1"/>
</dbReference>
<dbReference type="SMR" id="Q1H3U7"/>
<dbReference type="STRING" id="265072.Mfla_0570"/>
<dbReference type="KEGG" id="mfa:Mfla_0570"/>
<dbReference type="eggNOG" id="COG0468">
    <property type="taxonomic scope" value="Bacteria"/>
</dbReference>
<dbReference type="HOGENOM" id="CLU_040469_3_2_4"/>
<dbReference type="OrthoDB" id="9776733at2"/>
<dbReference type="Proteomes" id="UP000002440">
    <property type="component" value="Chromosome"/>
</dbReference>
<dbReference type="GO" id="GO:0005829">
    <property type="term" value="C:cytosol"/>
    <property type="evidence" value="ECO:0007669"/>
    <property type="project" value="TreeGrafter"/>
</dbReference>
<dbReference type="GO" id="GO:0005524">
    <property type="term" value="F:ATP binding"/>
    <property type="evidence" value="ECO:0007669"/>
    <property type="project" value="UniProtKB-UniRule"/>
</dbReference>
<dbReference type="GO" id="GO:0016887">
    <property type="term" value="F:ATP hydrolysis activity"/>
    <property type="evidence" value="ECO:0007669"/>
    <property type="project" value="InterPro"/>
</dbReference>
<dbReference type="GO" id="GO:0140664">
    <property type="term" value="F:ATP-dependent DNA damage sensor activity"/>
    <property type="evidence" value="ECO:0007669"/>
    <property type="project" value="InterPro"/>
</dbReference>
<dbReference type="GO" id="GO:0003684">
    <property type="term" value="F:damaged DNA binding"/>
    <property type="evidence" value="ECO:0007669"/>
    <property type="project" value="UniProtKB-UniRule"/>
</dbReference>
<dbReference type="GO" id="GO:0003697">
    <property type="term" value="F:single-stranded DNA binding"/>
    <property type="evidence" value="ECO:0007669"/>
    <property type="project" value="UniProtKB-UniRule"/>
</dbReference>
<dbReference type="GO" id="GO:0006310">
    <property type="term" value="P:DNA recombination"/>
    <property type="evidence" value="ECO:0007669"/>
    <property type="project" value="UniProtKB-UniRule"/>
</dbReference>
<dbReference type="GO" id="GO:0006281">
    <property type="term" value="P:DNA repair"/>
    <property type="evidence" value="ECO:0007669"/>
    <property type="project" value="UniProtKB-UniRule"/>
</dbReference>
<dbReference type="GO" id="GO:0009432">
    <property type="term" value="P:SOS response"/>
    <property type="evidence" value="ECO:0007669"/>
    <property type="project" value="UniProtKB-UniRule"/>
</dbReference>
<dbReference type="CDD" id="cd00983">
    <property type="entry name" value="RecA"/>
    <property type="match status" value="1"/>
</dbReference>
<dbReference type="FunFam" id="3.40.50.300:FF:000087">
    <property type="entry name" value="Recombinase RecA"/>
    <property type="match status" value="1"/>
</dbReference>
<dbReference type="Gene3D" id="3.40.50.300">
    <property type="entry name" value="P-loop containing nucleotide triphosphate hydrolases"/>
    <property type="match status" value="1"/>
</dbReference>
<dbReference type="HAMAP" id="MF_00268">
    <property type="entry name" value="RecA"/>
    <property type="match status" value="1"/>
</dbReference>
<dbReference type="InterPro" id="IPR003593">
    <property type="entry name" value="AAA+_ATPase"/>
</dbReference>
<dbReference type="InterPro" id="IPR013765">
    <property type="entry name" value="DNA_recomb/repair_RecA"/>
</dbReference>
<dbReference type="InterPro" id="IPR020584">
    <property type="entry name" value="DNA_recomb/repair_RecA_CS"/>
</dbReference>
<dbReference type="InterPro" id="IPR027417">
    <property type="entry name" value="P-loop_NTPase"/>
</dbReference>
<dbReference type="InterPro" id="IPR049261">
    <property type="entry name" value="RecA-like_C"/>
</dbReference>
<dbReference type="InterPro" id="IPR049428">
    <property type="entry name" value="RecA-like_N"/>
</dbReference>
<dbReference type="InterPro" id="IPR020588">
    <property type="entry name" value="RecA_ATP-bd"/>
</dbReference>
<dbReference type="InterPro" id="IPR023400">
    <property type="entry name" value="RecA_C_sf"/>
</dbReference>
<dbReference type="InterPro" id="IPR020587">
    <property type="entry name" value="RecA_monomer-monomer_interface"/>
</dbReference>
<dbReference type="NCBIfam" id="TIGR02012">
    <property type="entry name" value="tigrfam_recA"/>
    <property type="match status" value="1"/>
</dbReference>
<dbReference type="PANTHER" id="PTHR45900:SF1">
    <property type="entry name" value="MITOCHONDRIAL DNA REPAIR PROTEIN RECA HOMOLOG-RELATED"/>
    <property type="match status" value="1"/>
</dbReference>
<dbReference type="PANTHER" id="PTHR45900">
    <property type="entry name" value="RECA"/>
    <property type="match status" value="1"/>
</dbReference>
<dbReference type="Pfam" id="PF00154">
    <property type="entry name" value="RecA"/>
    <property type="match status" value="1"/>
</dbReference>
<dbReference type="Pfam" id="PF21096">
    <property type="entry name" value="RecA_C"/>
    <property type="match status" value="1"/>
</dbReference>
<dbReference type="PRINTS" id="PR00142">
    <property type="entry name" value="RECA"/>
</dbReference>
<dbReference type="SMART" id="SM00382">
    <property type="entry name" value="AAA"/>
    <property type="match status" value="1"/>
</dbReference>
<dbReference type="SUPFAM" id="SSF52540">
    <property type="entry name" value="P-loop containing nucleoside triphosphate hydrolases"/>
    <property type="match status" value="1"/>
</dbReference>
<dbReference type="SUPFAM" id="SSF54752">
    <property type="entry name" value="RecA protein, C-terminal domain"/>
    <property type="match status" value="1"/>
</dbReference>
<dbReference type="PROSITE" id="PS00321">
    <property type="entry name" value="RECA_1"/>
    <property type="match status" value="1"/>
</dbReference>
<dbReference type="PROSITE" id="PS50162">
    <property type="entry name" value="RECA_2"/>
    <property type="match status" value="1"/>
</dbReference>
<dbReference type="PROSITE" id="PS50163">
    <property type="entry name" value="RECA_3"/>
    <property type="match status" value="1"/>
</dbReference>
<protein>
    <recommendedName>
        <fullName evidence="1">Protein RecA</fullName>
    </recommendedName>
    <alternativeName>
        <fullName evidence="1">Recombinase A</fullName>
    </alternativeName>
</protein>
<gene>
    <name evidence="1" type="primary">recA</name>
    <name type="ordered locus">Mfla_0570</name>
</gene>
<accession>Q1H3U7</accession>